<dbReference type="EMBL" id="AL513382">
    <property type="protein sequence ID" value="CAD09167.1"/>
    <property type="molecule type" value="Genomic_DNA"/>
</dbReference>
<dbReference type="EMBL" id="AE014613">
    <property type="protein sequence ID" value="AAO71553.1"/>
    <property type="molecule type" value="Genomic_DNA"/>
</dbReference>
<dbReference type="RefSeq" id="NP_458481.1">
    <property type="nucleotide sequence ID" value="NC_003198.1"/>
</dbReference>
<dbReference type="RefSeq" id="WP_000868187.1">
    <property type="nucleotide sequence ID" value="NZ_WSUR01000046.1"/>
</dbReference>
<dbReference type="SMR" id="P0A7Q9"/>
<dbReference type="STRING" id="220341.gene:17588207"/>
<dbReference type="GeneID" id="98390421"/>
<dbReference type="KEGG" id="stt:t4086"/>
<dbReference type="KEGG" id="sty:STY4379"/>
<dbReference type="PATRIC" id="fig|90370.929.peg.2648"/>
<dbReference type="eggNOG" id="COG0257">
    <property type="taxonomic scope" value="Bacteria"/>
</dbReference>
<dbReference type="HOGENOM" id="CLU_135723_6_2_6"/>
<dbReference type="OrthoDB" id="9802520at2"/>
<dbReference type="Proteomes" id="UP000000541">
    <property type="component" value="Chromosome"/>
</dbReference>
<dbReference type="Proteomes" id="UP000002670">
    <property type="component" value="Chromosome"/>
</dbReference>
<dbReference type="GO" id="GO:0005737">
    <property type="term" value="C:cytoplasm"/>
    <property type="evidence" value="ECO:0007669"/>
    <property type="project" value="UniProtKB-ARBA"/>
</dbReference>
<dbReference type="GO" id="GO:1990904">
    <property type="term" value="C:ribonucleoprotein complex"/>
    <property type="evidence" value="ECO:0007669"/>
    <property type="project" value="UniProtKB-KW"/>
</dbReference>
<dbReference type="GO" id="GO:0005840">
    <property type="term" value="C:ribosome"/>
    <property type="evidence" value="ECO:0007669"/>
    <property type="project" value="UniProtKB-KW"/>
</dbReference>
<dbReference type="GO" id="GO:0003735">
    <property type="term" value="F:structural constituent of ribosome"/>
    <property type="evidence" value="ECO:0007669"/>
    <property type="project" value="InterPro"/>
</dbReference>
<dbReference type="GO" id="GO:0006412">
    <property type="term" value="P:translation"/>
    <property type="evidence" value="ECO:0007669"/>
    <property type="project" value="UniProtKB-UniRule"/>
</dbReference>
<dbReference type="HAMAP" id="MF_00251">
    <property type="entry name" value="Ribosomal_bL36"/>
    <property type="match status" value="1"/>
</dbReference>
<dbReference type="InterPro" id="IPR000473">
    <property type="entry name" value="Ribosomal_bL36"/>
</dbReference>
<dbReference type="InterPro" id="IPR035977">
    <property type="entry name" value="Ribosomal_bL36_sp"/>
</dbReference>
<dbReference type="NCBIfam" id="TIGR01022">
    <property type="entry name" value="rpmJ_bact"/>
    <property type="match status" value="1"/>
</dbReference>
<dbReference type="PANTHER" id="PTHR42888">
    <property type="entry name" value="50S RIBOSOMAL PROTEIN L36, CHLOROPLASTIC"/>
    <property type="match status" value="1"/>
</dbReference>
<dbReference type="PANTHER" id="PTHR42888:SF1">
    <property type="entry name" value="LARGE RIBOSOMAL SUBUNIT PROTEIN BL36C"/>
    <property type="match status" value="1"/>
</dbReference>
<dbReference type="Pfam" id="PF00444">
    <property type="entry name" value="Ribosomal_L36"/>
    <property type="match status" value="1"/>
</dbReference>
<dbReference type="SUPFAM" id="SSF57840">
    <property type="entry name" value="Ribosomal protein L36"/>
    <property type="match status" value="1"/>
</dbReference>
<dbReference type="PROSITE" id="PS00828">
    <property type="entry name" value="RIBOSOMAL_L36"/>
    <property type="match status" value="1"/>
</dbReference>
<evidence type="ECO:0000255" key="1">
    <source>
        <dbReference type="HAMAP-Rule" id="MF_00251"/>
    </source>
</evidence>
<evidence type="ECO:0000305" key="2"/>
<protein>
    <recommendedName>
        <fullName evidence="1">Large ribosomal subunit protein bL36A</fullName>
    </recommendedName>
    <alternativeName>
        <fullName evidence="2">50S ribosomal protein L36 1</fullName>
    </alternativeName>
</protein>
<name>RL361_SALTI</name>
<feature type="chain" id="PRO_0000126251" description="Large ribosomal subunit protein bL36A">
    <location>
        <begin position="1"/>
        <end position="38"/>
    </location>
</feature>
<accession>P0A7Q9</accession>
<accession>P21194</accession>
<comment type="similarity">
    <text evidence="2">Belongs to the bacterial ribosomal protein bL36 family.</text>
</comment>
<organism>
    <name type="scientific">Salmonella typhi</name>
    <dbReference type="NCBI Taxonomy" id="90370"/>
    <lineage>
        <taxon>Bacteria</taxon>
        <taxon>Pseudomonadati</taxon>
        <taxon>Pseudomonadota</taxon>
        <taxon>Gammaproteobacteria</taxon>
        <taxon>Enterobacterales</taxon>
        <taxon>Enterobacteriaceae</taxon>
        <taxon>Salmonella</taxon>
    </lineage>
</organism>
<proteinExistence type="inferred from homology"/>
<keyword id="KW-0687">Ribonucleoprotein</keyword>
<keyword id="KW-0689">Ribosomal protein</keyword>
<sequence>MKVRASVKKLCRNCKIVKRDGVIRVICSAEPKHKQRQG</sequence>
<reference key="1">
    <citation type="journal article" date="2001" name="Nature">
        <title>Complete genome sequence of a multiple drug resistant Salmonella enterica serovar Typhi CT18.</title>
        <authorList>
            <person name="Parkhill J."/>
            <person name="Dougan G."/>
            <person name="James K.D."/>
            <person name="Thomson N.R."/>
            <person name="Pickard D."/>
            <person name="Wain J."/>
            <person name="Churcher C.M."/>
            <person name="Mungall K.L."/>
            <person name="Bentley S.D."/>
            <person name="Holden M.T.G."/>
            <person name="Sebaihia M."/>
            <person name="Baker S."/>
            <person name="Basham D."/>
            <person name="Brooks K."/>
            <person name="Chillingworth T."/>
            <person name="Connerton P."/>
            <person name="Cronin A."/>
            <person name="Davis P."/>
            <person name="Davies R.M."/>
            <person name="Dowd L."/>
            <person name="White N."/>
            <person name="Farrar J."/>
            <person name="Feltwell T."/>
            <person name="Hamlin N."/>
            <person name="Haque A."/>
            <person name="Hien T.T."/>
            <person name="Holroyd S."/>
            <person name="Jagels K."/>
            <person name="Krogh A."/>
            <person name="Larsen T.S."/>
            <person name="Leather S."/>
            <person name="Moule S."/>
            <person name="O'Gaora P."/>
            <person name="Parry C."/>
            <person name="Quail M.A."/>
            <person name="Rutherford K.M."/>
            <person name="Simmonds M."/>
            <person name="Skelton J."/>
            <person name="Stevens K."/>
            <person name="Whitehead S."/>
            <person name="Barrell B.G."/>
        </authorList>
    </citation>
    <scope>NUCLEOTIDE SEQUENCE [LARGE SCALE GENOMIC DNA]</scope>
    <source>
        <strain>CT18</strain>
    </source>
</reference>
<reference key="2">
    <citation type="journal article" date="2003" name="J. Bacteriol.">
        <title>Comparative genomics of Salmonella enterica serovar Typhi strains Ty2 and CT18.</title>
        <authorList>
            <person name="Deng W."/>
            <person name="Liou S.-R."/>
            <person name="Plunkett G. III"/>
            <person name="Mayhew G.F."/>
            <person name="Rose D.J."/>
            <person name="Burland V."/>
            <person name="Kodoyianni V."/>
            <person name="Schwartz D.C."/>
            <person name="Blattner F.R."/>
        </authorList>
    </citation>
    <scope>NUCLEOTIDE SEQUENCE [LARGE SCALE GENOMIC DNA]</scope>
    <source>
        <strain>ATCC 700931 / Ty2</strain>
    </source>
</reference>
<gene>
    <name type="primary">rpmJ</name>
    <name type="ordered locus">STY4379</name>
    <name type="ordered locus">t4086</name>
</gene>